<protein>
    <recommendedName>
        <fullName evidence="1">UvrABC system protein B</fullName>
        <shortName evidence="1">Protein UvrB</shortName>
    </recommendedName>
    <alternativeName>
        <fullName evidence="1">Excinuclease ABC subunit B</fullName>
    </alternativeName>
</protein>
<name>UVRB_CLOPS</name>
<feature type="chain" id="PRO_1000077881" description="UvrABC system protein B">
    <location>
        <begin position="1"/>
        <end position="659"/>
    </location>
</feature>
<feature type="domain" description="Helicase ATP-binding" evidence="1">
    <location>
        <begin position="25"/>
        <end position="182"/>
    </location>
</feature>
<feature type="domain" description="Helicase C-terminal" evidence="1">
    <location>
        <begin position="429"/>
        <end position="582"/>
    </location>
</feature>
<feature type="domain" description="UVR" evidence="1">
    <location>
        <begin position="622"/>
        <end position="657"/>
    </location>
</feature>
<feature type="short sequence motif" description="Beta-hairpin">
    <location>
        <begin position="91"/>
        <end position="114"/>
    </location>
</feature>
<feature type="binding site" evidence="1">
    <location>
        <begin position="38"/>
        <end position="45"/>
    </location>
    <ligand>
        <name>ATP</name>
        <dbReference type="ChEBI" id="CHEBI:30616"/>
    </ligand>
</feature>
<comment type="function">
    <text evidence="1">The UvrABC repair system catalyzes the recognition and processing of DNA lesions. A damage recognition complex composed of 2 UvrA and 2 UvrB subunits scans DNA for abnormalities. Upon binding of the UvrA(2)B(2) complex to a putative damaged site, the DNA wraps around one UvrB monomer. DNA wrap is dependent on ATP binding by UvrB and probably causes local melting of the DNA helix, facilitating insertion of UvrB beta-hairpin between the DNA strands. Then UvrB probes one DNA strand for the presence of a lesion. If a lesion is found the UvrA subunits dissociate and the UvrB-DNA preincision complex is formed. This complex is subsequently bound by UvrC and the second UvrB is released. If no lesion is found, the DNA wraps around the other UvrB subunit that will check the other stand for damage.</text>
</comment>
<comment type="subunit">
    <text evidence="1">Forms a heterotetramer with UvrA during the search for lesions. Interacts with UvrC in an incision complex.</text>
</comment>
<comment type="subcellular location">
    <subcellularLocation>
        <location evidence="1">Cytoplasm</location>
    </subcellularLocation>
</comment>
<comment type="domain">
    <text evidence="1">The beta-hairpin motif is involved in DNA binding.</text>
</comment>
<comment type="similarity">
    <text evidence="1">Belongs to the UvrB family.</text>
</comment>
<gene>
    <name evidence="1" type="primary">uvrB</name>
    <name type="ordered locus">CPR_0295</name>
</gene>
<organism>
    <name type="scientific">Clostridium perfringens (strain SM101 / Type A)</name>
    <dbReference type="NCBI Taxonomy" id="289380"/>
    <lineage>
        <taxon>Bacteria</taxon>
        <taxon>Bacillati</taxon>
        <taxon>Bacillota</taxon>
        <taxon>Clostridia</taxon>
        <taxon>Eubacteriales</taxon>
        <taxon>Clostridiaceae</taxon>
        <taxon>Clostridium</taxon>
    </lineage>
</organism>
<reference key="1">
    <citation type="journal article" date="2006" name="Genome Res.">
        <title>Skewed genomic variability in strains of the toxigenic bacterial pathogen, Clostridium perfringens.</title>
        <authorList>
            <person name="Myers G.S.A."/>
            <person name="Rasko D.A."/>
            <person name="Cheung J.K."/>
            <person name="Ravel J."/>
            <person name="Seshadri R."/>
            <person name="DeBoy R.T."/>
            <person name="Ren Q."/>
            <person name="Varga J."/>
            <person name="Awad M.M."/>
            <person name="Brinkac L.M."/>
            <person name="Daugherty S.C."/>
            <person name="Haft D.H."/>
            <person name="Dodson R.J."/>
            <person name="Madupu R."/>
            <person name="Nelson W.C."/>
            <person name="Rosovitz M.J."/>
            <person name="Sullivan S.A."/>
            <person name="Khouri H."/>
            <person name="Dimitrov G.I."/>
            <person name="Watkins K.L."/>
            <person name="Mulligan S."/>
            <person name="Benton J."/>
            <person name="Radune D."/>
            <person name="Fisher D.J."/>
            <person name="Atkins H.S."/>
            <person name="Hiscox T."/>
            <person name="Jost B.H."/>
            <person name="Billington S.J."/>
            <person name="Songer J.G."/>
            <person name="McClane B.A."/>
            <person name="Titball R.W."/>
            <person name="Rood J.I."/>
            <person name="Melville S.B."/>
            <person name="Paulsen I.T."/>
        </authorList>
    </citation>
    <scope>NUCLEOTIDE SEQUENCE [LARGE SCALE GENOMIC DNA]</scope>
    <source>
        <strain>SM101 / Type A</strain>
    </source>
</reference>
<sequence>MGEFKIQSKFKPTGDQPKAIDTLVQSIENGNRGQTLLGVTGSGKTFTMANIIERTQKPTLILAHNKTLAAQLCAEFKEFFPDNIVEYFVSYYDYYQPEAYVPQTDTFIEKDASINDEIDKLRHSATSALLERRDVIIVASVSCIYGLGNPEEYKKLTISLRPGMIKDRDEVIKKLIEIQYERNDIDFARGTFRVRGDNLDIIPSSSSSKGIRIEFFGDEIDRIREFDVLTGNIIGERQHVSITPASHFAASEETLEKSISIIEDELEDRLKVLTAEDKILEAQRLKQRTNYDIEMIREMGYCQGIENYSRILDGRMPGTPPQTLLDYFPEDFLMFIDESHVTLPQVRAMYAGDRSRKTSLVEFGFRLPCAFDNRPLKFSEFESKINQVVFVSATPGEYELDHSEIVAEQIIRPTGLLDPVIEIRPIKGQIDDLYGEIQRTVQRGFRVLITTLTKRMAEDLTKYLKDLNVKATYMHSDIDTLERMKIIRELRLGEVDVLIGINLLREGLDIPEVALVAILDADKEGFLRSETSLIQTIGRAARNSESKVIMYADNITKSMDKSIKETERRRVIQMEYNEEHNITPTTVIKGVRDIIEATKVSEEKENYESEVKKAAKKDIPIEKLIEQYEEEMKEAAKNLQFERAAELRDIIKDLKENSK</sequence>
<proteinExistence type="inferred from homology"/>
<dbReference type="EMBL" id="CP000312">
    <property type="protein sequence ID" value="ABG86249.1"/>
    <property type="molecule type" value="Genomic_DNA"/>
</dbReference>
<dbReference type="RefSeq" id="WP_004456009.1">
    <property type="nucleotide sequence ID" value="NC_008262.1"/>
</dbReference>
<dbReference type="SMR" id="Q0SW76"/>
<dbReference type="KEGG" id="cpr:CPR_0295"/>
<dbReference type="Proteomes" id="UP000001824">
    <property type="component" value="Chromosome"/>
</dbReference>
<dbReference type="GO" id="GO:0005737">
    <property type="term" value="C:cytoplasm"/>
    <property type="evidence" value="ECO:0007669"/>
    <property type="project" value="UniProtKB-SubCell"/>
</dbReference>
<dbReference type="GO" id="GO:0009380">
    <property type="term" value="C:excinuclease repair complex"/>
    <property type="evidence" value="ECO:0007669"/>
    <property type="project" value="InterPro"/>
</dbReference>
<dbReference type="GO" id="GO:0005524">
    <property type="term" value="F:ATP binding"/>
    <property type="evidence" value="ECO:0007669"/>
    <property type="project" value="UniProtKB-UniRule"/>
</dbReference>
<dbReference type="GO" id="GO:0016887">
    <property type="term" value="F:ATP hydrolysis activity"/>
    <property type="evidence" value="ECO:0007669"/>
    <property type="project" value="InterPro"/>
</dbReference>
<dbReference type="GO" id="GO:0003677">
    <property type="term" value="F:DNA binding"/>
    <property type="evidence" value="ECO:0007669"/>
    <property type="project" value="UniProtKB-UniRule"/>
</dbReference>
<dbReference type="GO" id="GO:0009381">
    <property type="term" value="F:excinuclease ABC activity"/>
    <property type="evidence" value="ECO:0007669"/>
    <property type="project" value="UniProtKB-UniRule"/>
</dbReference>
<dbReference type="GO" id="GO:0004386">
    <property type="term" value="F:helicase activity"/>
    <property type="evidence" value="ECO:0007669"/>
    <property type="project" value="UniProtKB-KW"/>
</dbReference>
<dbReference type="GO" id="GO:0006289">
    <property type="term" value="P:nucleotide-excision repair"/>
    <property type="evidence" value="ECO:0007669"/>
    <property type="project" value="UniProtKB-UniRule"/>
</dbReference>
<dbReference type="GO" id="GO:0009432">
    <property type="term" value="P:SOS response"/>
    <property type="evidence" value="ECO:0007669"/>
    <property type="project" value="UniProtKB-UniRule"/>
</dbReference>
<dbReference type="CDD" id="cd17916">
    <property type="entry name" value="DEXHc_UvrB"/>
    <property type="match status" value="1"/>
</dbReference>
<dbReference type="CDD" id="cd18790">
    <property type="entry name" value="SF2_C_UvrB"/>
    <property type="match status" value="1"/>
</dbReference>
<dbReference type="Gene3D" id="3.40.50.300">
    <property type="entry name" value="P-loop containing nucleotide triphosphate hydrolases"/>
    <property type="match status" value="3"/>
</dbReference>
<dbReference type="Gene3D" id="4.10.860.10">
    <property type="entry name" value="UVR domain"/>
    <property type="match status" value="1"/>
</dbReference>
<dbReference type="HAMAP" id="MF_00204">
    <property type="entry name" value="UvrB"/>
    <property type="match status" value="1"/>
</dbReference>
<dbReference type="InterPro" id="IPR006935">
    <property type="entry name" value="Helicase/UvrB_N"/>
</dbReference>
<dbReference type="InterPro" id="IPR014001">
    <property type="entry name" value="Helicase_ATP-bd"/>
</dbReference>
<dbReference type="InterPro" id="IPR001650">
    <property type="entry name" value="Helicase_C-like"/>
</dbReference>
<dbReference type="InterPro" id="IPR027417">
    <property type="entry name" value="P-loop_NTPase"/>
</dbReference>
<dbReference type="InterPro" id="IPR001943">
    <property type="entry name" value="UVR_dom"/>
</dbReference>
<dbReference type="InterPro" id="IPR036876">
    <property type="entry name" value="UVR_dom_sf"/>
</dbReference>
<dbReference type="InterPro" id="IPR004807">
    <property type="entry name" value="UvrB"/>
</dbReference>
<dbReference type="InterPro" id="IPR041471">
    <property type="entry name" value="UvrB_inter"/>
</dbReference>
<dbReference type="InterPro" id="IPR024759">
    <property type="entry name" value="UvrB_YAD/RRR_dom"/>
</dbReference>
<dbReference type="NCBIfam" id="NF003673">
    <property type="entry name" value="PRK05298.1"/>
    <property type="match status" value="1"/>
</dbReference>
<dbReference type="NCBIfam" id="TIGR00631">
    <property type="entry name" value="uvrb"/>
    <property type="match status" value="1"/>
</dbReference>
<dbReference type="PANTHER" id="PTHR24029">
    <property type="entry name" value="UVRABC SYSTEM PROTEIN B"/>
    <property type="match status" value="1"/>
</dbReference>
<dbReference type="PANTHER" id="PTHR24029:SF0">
    <property type="entry name" value="UVRABC SYSTEM PROTEIN B"/>
    <property type="match status" value="1"/>
</dbReference>
<dbReference type="Pfam" id="PF00271">
    <property type="entry name" value="Helicase_C"/>
    <property type="match status" value="1"/>
</dbReference>
<dbReference type="Pfam" id="PF04851">
    <property type="entry name" value="ResIII"/>
    <property type="match status" value="1"/>
</dbReference>
<dbReference type="Pfam" id="PF02151">
    <property type="entry name" value="UVR"/>
    <property type="match status" value="1"/>
</dbReference>
<dbReference type="Pfam" id="PF12344">
    <property type="entry name" value="UvrB"/>
    <property type="match status" value="1"/>
</dbReference>
<dbReference type="Pfam" id="PF17757">
    <property type="entry name" value="UvrB_inter"/>
    <property type="match status" value="1"/>
</dbReference>
<dbReference type="SMART" id="SM00487">
    <property type="entry name" value="DEXDc"/>
    <property type="match status" value="1"/>
</dbReference>
<dbReference type="SMART" id="SM00490">
    <property type="entry name" value="HELICc"/>
    <property type="match status" value="1"/>
</dbReference>
<dbReference type="SUPFAM" id="SSF46600">
    <property type="entry name" value="C-terminal UvrC-binding domain of UvrB"/>
    <property type="match status" value="1"/>
</dbReference>
<dbReference type="SUPFAM" id="SSF52540">
    <property type="entry name" value="P-loop containing nucleoside triphosphate hydrolases"/>
    <property type="match status" value="2"/>
</dbReference>
<dbReference type="PROSITE" id="PS51192">
    <property type="entry name" value="HELICASE_ATP_BIND_1"/>
    <property type="match status" value="1"/>
</dbReference>
<dbReference type="PROSITE" id="PS51194">
    <property type="entry name" value="HELICASE_CTER"/>
    <property type="match status" value="1"/>
</dbReference>
<dbReference type="PROSITE" id="PS50151">
    <property type="entry name" value="UVR"/>
    <property type="match status" value="1"/>
</dbReference>
<accession>Q0SW76</accession>
<keyword id="KW-0067">ATP-binding</keyword>
<keyword id="KW-0963">Cytoplasm</keyword>
<keyword id="KW-0227">DNA damage</keyword>
<keyword id="KW-0228">DNA excision</keyword>
<keyword id="KW-0234">DNA repair</keyword>
<keyword id="KW-0267">Excision nuclease</keyword>
<keyword id="KW-0347">Helicase</keyword>
<keyword id="KW-0378">Hydrolase</keyword>
<keyword id="KW-0547">Nucleotide-binding</keyword>
<keyword id="KW-0742">SOS response</keyword>
<evidence type="ECO:0000255" key="1">
    <source>
        <dbReference type="HAMAP-Rule" id="MF_00204"/>
    </source>
</evidence>